<name>RBM12_PONAB</name>
<sequence length="932" mass="97369">MAVVIRLQGLPIVAGTMDIRHFFSGLTIPDGGVHIVGGELGEAFIVFATDEDARLGMMRTGGTIKGSKVTLLLSSKTEMQNMIELSRRRFETANLDIPPANASRSGPPPSSGMSGRVNLPTTVSNFNNPSPSVVTATTSVHESNKNIQTFSTASVGTAPPNMGASFGSPAFSSTVPSTASPMNTVPPPPIPPIPAMPSLPPMPSIPPIPVPPPVPTLPPVPPVPPIPPVPSVPPMTPLPPMSGMPPLNPPPVAPLPAGMNGSGAPMNLNNNLNPMFLGPLNPVNPIQMNSQSSVKPLPINPDDLYVSVHGMPFSAMENDVRDFFHGLRVDAVHLLKDHVGRNNGNGLVKFLSPQDTFEALKRNRMLMIQRYVEVSPATERQWVAAGGHITFKQNMGPSGQTHPPPQTLPRSKSPSGQKRSRSRSPHEAGFCVYLKGLPFEAENKHVIDFFKKLDIVEDSIYIAYGPNGKATGEGFVEFRNEADYKAALCRHKQYMGNRFIQVHPITKKGMLEKIDMIRKRLQNFSYDQREMILNPEGDVNSAKVCAHITNIPFSITKMDVLQFLEGIPVDENAVHVLVDNNGQGLGQALVQFKNEDDARKSERLHRKKLNGREAFVHVVTLEDMREIEKNPPAQGKKGLKMPVPGNPAVPGMPNAGLPGVGLPSAGLPGAGLPSTGLPGSAITSAGLPGAGMPSAGIPSAGGEEHAFLTVGSKEANNGPPFNFPGNFGGSNAFGPPIPPPGLGGGAFGDARPGMPSVGNSGLPGLGLDVPGFGGGPNNLSGPSGFGGGPQNFGNGPGSLGGPPGFGSGPPGLGSAPGHLGGPPAFGPGPGPGPGPGPGPIHIGGPPGFASSSGKPGPTVIKVQNMPFTVSIDEILDFFYGYQVIPGSVCLKYNEKGMPTGEAMVAFESRDEATAAVIDLNDRPIGSRKVNLY</sequence>
<proteinExistence type="evidence at transcript level"/>
<accession>Q5RBM8</accession>
<keyword id="KW-0539">Nucleus</keyword>
<keyword id="KW-0597">Phosphoprotein</keyword>
<keyword id="KW-1185">Reference proteome</keyword>
<keyword id="KW-0677">Repeat</keyword>
<keyword id="KW-0694">RNA-binding</keyword>
<feature type="chain" id="PRO_0000271373" description="RNA-binding protein 12">
    <location>
        <begin position="1"/>
        <end position="932"/>
    </location>
</feature>
<feature type="domain" description="RRM 1" evidence="3">
    <location>
        <begin position="304"/>
        <end position="379"/>
    </location>
</feature>
<feature type="domain" description="RRM 2" evidence="3">
    <location>
        <begin position="430"/>
        <end position="507"/>
    </location>
</feature>
<feature type="domain" description="RRM 3" evidence="3">
    <location>
        <begin position="856"/>
        <end position="932"/>
    </location>
</feature>
<feature type="region of interest" description="Disordered" evidence="4">
    <location>
        <begin position="97"/>
        <end position="116"/>
    </location>
</feature>
<feature type="region of interest" description="Disordered" evidence="4">
    <location>
        <begin position="392"/>
        <end position="424"/>
    </location>
</feature>
<feature type="region of interest" description="Disordered" evidence="4">
    <location>
        <begin position="717"/>
        <end position="855"/>
    </location>
</feature>
<feature type="compositionally biased region" description="Low complexity" evidence="4">
    <location>
        <begin position="98"/>
        <end position="116"/>
    </location>
</feature>
<feature type="compositionally biased region" description="Polar residues" evidence="4">
    <location>
        <begin position="392"/>
        <end position="401"/>
    </location>
</feature>
<feature type="compositionally biased region" description="Polar residues" evidence="4">
    <location>
        <begin position="408"/>
        <end position="417"/>
    </location>
</feature>
<feature type="compositionally biased region" description="Low complexity" evidence="4">
    <location>
        <begin position="717"/>
        <end position="734"/>
    </location>
</feature>
<feature type="compositionally biased region" description="Gly residues" evidence="4">
    <location>
        <begin position="783"/>
        <end position="811"/>
    </location>
</feature>
<feature type="compositionally biased region" description="Pro residues" evidence="4">
    <location>
        <begin position="824"/>
        <end position="838"/>
    </location>
</feature>
<feature type="modified residue" description="Phosphoserine" evidence="2">
    <location>
        <position position="352"/>
    </location>
</feature>
<feature type="modified residue" description="Phosphoserine" evidence="2">
    <location>
        <position position="375"/>
    </location>
</feature>
<feature type="modified residue" description="Phosphoserine" evidence="2">
    <location>
        <position position="420"/>
    </location>
</feature>
<feature type="modified residue" description="Phosphoserine" evidence="2">
    <location>
        <position position="422"/>
    </location>
</feature>
<feature type="modified residue" description="Phosphoserine" evidence="2">
    <location>
        <position position="424"/>
    </location>
</feature>
<feature type="modified residue" description="Phosphoserine" evidence="2">
    <location>
        <position position="525"/>
    </location>
</feature>
<organism>
    <name type="scientific">Pongo abelii</name>
    <name type="common">Sumatran orangutan</name>
    <name type="synonym">Pongo pygmaeus abelii</name>
    <dbReference type="NCBI Taxonomy" id="9601"/>
    <lineage>
        <taxon>Eukaryota</taxon>
        <taxon>Metazoa</taxon>
        <taxon>Chordata</taxon>
        <taxon>Craniata</taxon>
        <taxon>Vertebrata</taxon>
        <taxon>Euteleostomi</taxon>
        <taxon>Mammalia</taxon>
        <taxon>Eutheria</taxon>
        <taxon>Euarchontoglires</taxon>
        <taxon>Primates</taxon>
        <taxon>Haplorrhini</taxon>
        <taxon>Catarrhini</taxon>
        <taxon>Hominidae</taxon>
        <taxon>Pongo</taxon>
    </lineage>
</organism>
<evidence type="ECO:0000250" key="1"/>
<evidence type="ECO:0000250" key="2">
    <source>
        <dbReference type="UniProtKB" id="Q9NTZ6"/>
    </source>
</evidence>
<evidence type="ECO:0000255" key="3">
    <source>
        <dbReference type="PROSITE-ProRule" id="PRU00176"/>
    </source>
</evidence>
<evidence type="ECO:0000256" key="4">
    <source>
        <dbReference type="SAM" id="MobiDB-lite"/>
    </source>
</evidence>
<gene>
    <name type="primary">RBM12</name>
</gene>
<protein>
    <recommendedName>
        <fullName>RNA-binding protein 12</fullName>
    </recommendedName>
    <alternativeName>
        <fullName>RNA-binding motif protein 12</fullName>
    </alternativeName>
</protein>
<reference key="1">
    <citation type="submission" date="2004-11" db="EMBL/GenBank/DDBJ databases">
        <authorList>
            <consortium name="The German cDNA consortium"/>
        </authorList>
    </citation>
    <scope>NUCLEOTIDE SEQUENCE [LARGE SCALE MRNA]</scope>
    <source>
        <tissue>Kidney</tissue>
    </source>
</reference>
<comment type="subcellular location">
    <subcellularLocation>
        <location evidence="1">Nucleus</location>
    </subcellularLocation>
</comment>
<dbReference type="EMBL" id="CR858610">
    <property type="protein sequence ID" value="CAH90832.1"/>
    <property type="molecule type" value="mRNA"/>
</dbReference>
<dbReference type="RefSeq" id="NP_001125474.1">
    <property type="nucleotide sequence ID" value="NM_001132002.1"/>
</dbReference>
<dbReference type="SMR" id="Q5RBM8"/>
<dbReference type="FunCoup" id="Q5RBM8">
    <property type="interactions" value="2779"/>
</dbReference>
<dbReference type="STRING" id="9601.ENSPPYP00000012237"/>
<dbReference type="GeneID" id="100172383"/>
<dbReference type="KEGG" id="pon:100172383"/>
<dbReference type="CTD" id="10137"/>
<dbReference type="eggNOG" id="KOG4307">
    <property type="taxonomic scope" value="Eukaryota"/>
</dbReference>
<dbReference type="InParanoid" id="Q5RBM8"/>
<dbReference type="OrthoDB" id="2588702at2759"/>
<dbReference type="Proteomes" id="UP000001595">
    <property type="component" value="Unplaced"/>
</dbReference>
<dbReference type="GO" id="GO:0005634">
    <property type="term" value="C:nucleus"/>
    <property type="evidence" value="ECO:0007669"/>
    <property type="project" value="UniProtKB-SubCell"/>
</dbReference>
<dbReference type="GO" id="GO:0003723">
    <property type="term" value="F:RNA binding"/>
    <property type="evidence" value="ECO:0007669"/>
    <property type="project" value="UniProtKB-KW"/>
</dbReference>
<dbReference type="CDD" id="cd12745">
    <property type="entry name" value="RRM1_RBM12"/>
    <property type="match status" value="1"/>
</dbReference>
<dbReference type="CDD" id="cd12747">
    <property type="entry name" value="RRM2_RBM12"/>
    <property type="match status" value="1"/>
</dbReference>
<dbReference type="CDD" id="cd12512">
    <property type="entry name" value="RRM3_RBM12"/>
    <property type="match status" value="1"/>
</dbReference>
<dbReference type="CDD" id="cd12749">
    <property type="entry name" value="RRM4_RBM12"/>
    <property type="match status" value="1"/>
</dbReference>
<dbReference type="CDD" id="cd12751">
    <property type="entry name" value="RRM5_RBM12"/>
    <property type="match status" value="1"/>
</dbReference>
<dbReference type="FunFam" id="3.30.70.330:FF:000193">
    <property type="entry name" value="RNA-binding motif protein 12"/>
    <property type="match status" value="1"/>
</dbReference>
<dbReference type="FunFam" id="3.30.70.330:FF:000228">
    <property type="entry name" value="RNA-binding motif protein 12"/>
    <property type="match status" value="1"/>
</dbReference>
<dbReference type="FunFam" id="3.30.70.330:FF:000303">
    <property type="entry name" value="RNA-binding motif protein 12"/>
    <property type="match status" value="1"/>
</dbReference>
<dbReference type="FunFam" id="3.30.70.330:FF:000307">
    <property type="entry name" value="RNA-binding motif protein 12"/>
    <property type="match status" value="1"/>
</dbReference>
<dbReference type="FunFam" id="3.30.70.330:FF:000363">
    <property type="entry name" value="RNA-binding motif protein 12"/>
    <property type="match status" value="1"/>
</dbReference>
<dbReference type="Gene3D" id="3.30.70.330">
    <property type="match status" value="5"/>
</dbReference>
<dbReference type="InterPro" id="IPR050666">
    <property type="entry name" value="ESRP"/>
</dbReference>
<dbReference type="InterPro" id="IPR012677">
    <property type="entry name" value="Nucleotide-bd_a/b_plait_sf"/>
</dbReference>
<dbReference type="InterPro" id="IPR035979">
    <property type="entry name" value="RBD_domain_sf"/>
</dbReference>
<dbReference type="InterPro" id="IPR034591">
    <property type="entry name" value="RBM12_RRM1"/>
</dbReference>
<dbReference type="InterPro" id="IPR034594">
    <property type="entry name" value="RBM12_RRM2"/>
</dbReference>
<dbReference type="InterPro" id="IPR034855">
    <property type="entry name" value="RBM12_RRM3"/>
</dbReference>
<dbReference type="InterPro" id="IPR034856">
    <property type="entry name" value="RBM12_RRM4"/>
</dbReference>
<dbReference type="InterPro" id="IPR034854">
    <property type="entry name" value="RBM12_RRM5"/>
</dbReference>
<dbReference type="InterPro" id="IPR000504">
    <property type="entry name" value="RRM_dom"/>
</dbReference>
<dbReference type="PANTHER" id="PTHR13976">
    <property type="entry name" value="HETEROGENEOUS NUCLEAR RIBONUCLEOPROTEIN-RELATED"/>
    <property type="match status" value="1"/>
</dbReference>
<dbReference type="Pfam" id="PF00076">
    <property type="entry name" value="RRM_1"/>
    <property type="match status" value="3"/>
</dbReference>
<dbReference type="SMART" id="SM00360">
    <property type="entry name" value="RRM"/>
    <property type="match status" value="4"/>
</dbReference>
<dbReference type="SUPFAM" id="SSF54928">
    <property type="entry name" value="RNA-binding domain, RBD"/>
    <property type="match status" value="4"/>
</dbReference>
<dbReference type="PROSITE" id="PS50102">
    <property type="entry name" value="RRM"/>
    <property type="match status" value="3"/>
</dbReference>